<keyword id="KW-0165">Cleavage on pair of basic residues</keyword>
<keyword id="KW-1015">Disulfide bond</keyword>
<keyword id="KW-0528">Neurotoxin</keyword>
<keyword id="KW-0964">Secreted</keyword>
<keyword id="KW-0732">Signal</keyword>
<keyword id="KW-0800">Toxin</keyword>
<protein>
    <recommendedName>
        <fullName evidence="3">Elevenin</fullName>
    </recommendedName>
</protein>
<accession>P0DQY9</accession>
<proteinExistence type="inferred from homology"/>
<sequence length="111" mass="12383">MAPSQKALLVLVLSMLLTASDSRARRIDCTRFVYAPICRGVAAKRGGDSLSVGASTELDDALTDPFLRSEEPREEDTEKKWRELSRLSRVLQILLSHPTGETEQLDRLLTL</sequence>
<feature type="signal peptide" evidence="2">
    <location>
        <begin position="1"/>
        <end position="24"/>
    </location>
</feature>
<feature type="peptide" id="PRO_0000458106" description="Elevenin" evidence="1">
    <location>
        <begin position="25"/>
        <end position="43"/>
    </location>
</feature>
<feature type="propeptide" id="PRO_0000458107" evidence="1">
    <location>
        <begin position="44"/>
        <end position="111"/>
    </location>
</feature>
<feature type="disulfide bond" evidence="1">
    <location>
        <begin position="29"/>
        <end position="38"/>
    </location>
</feature>
<organism>
    <name type="scientific">Conus ebraeus</name>
    <name type="common">Hebrew cone</name>
    <dbReference type="NCBI Taxonomy" id="89425"/>
    <lineage>
        <taxon>Eukaryota</taxon>
        <taxon>Metazoa</taxon>
        <taxon>Spiralia</taxon>
        <taxon>Lophotrochozoa</taxon>
        <taxon>Mollusca</taxon>
        <taxon>Gastropoda</taxon>
        <taxon>Caenogastropoda</taxon>
        <taxon>Neogastropoda</taxon>
        <taxon>Conoidea</taxon>
        <taxon>Conidae</taxon>
        <taxon>Conus</taxon>
        <taxon>Virroconus</taxon>
    </lineage>
</organism>
<name>CELE_CONEA</name>
<reference key="1">
    <citation type="journal article" date="2022" name="Mar. Drugs">
        <title>Comparative venomics of the cryptic cone snail species Virroconus ebraeus and Virroconus judaeus.</title>
        <authorList>
            <person name="Pardos-Blas J.R."/>
            <person name="Tenorio M.J."/>
            <person name="Galindo J.C.G."/>
            <person name="Zardoya R."/>
        </authorList>
    </citation>
    <scope>NUCLEOTIDE SEQUENCE [MRNA]</scope>
    <source>
        <tissue>Venom duct</tissue>
    </source>
</reference>
<dbReference type="EMBL" id="OM633621">
    <property type="protein sequence ID" value="UMA82996.1"/>
    <property type="molecule type" value="mRNA"/>
</dbReference>
<dbReference type="GO" id="GO:0005576">
    <property type="term" value="C:extracellular region"/>
    <property type="evidence" value="ECO:0007669"/>
    <property type="project" value="UniProtKB-SubCell"/>
</dbReference>
<dbReference type="GO" id="GO:0090729">
    <property type="term" value="F:toxin activity"/>
    <property type="evidence" value="ECO:0007669"/>
    <property type="project" value="UniProtKB-KW"/>
</dbReference>
<evidence type="ECO:0000250" key="1">
    <source>
        <dbReference type="UniProtKB" id="A0A0F7YZQ7"/>
    </source>
</evidence>
<evidence type="ECO:0000255" key="2"/>
<evidence type="ECO:0000303" key="3">
    <source>
    </source>
</evidence>
<evidence type="ECO:0000305" key="4"/>
<evidence type="ECO:0000305" key="5">
    <source>
    </source>
</evidence>
<comment type="function">
    <text evidence="1">May mimic the function of prey elevenin neuropeptide. In vivo, intracranial injection in mice induces hyperactivity.</text>
</comment>
<comment type="subunit">
    <text evidence="1">Monomer.</text>
</comment>
<comment type="subcellular location">
    <subcellularLocation>
        <location evidence="5">Secreted</location>
    </subcellularLocation>
</comment>
<comment type="tissue specificity">
    <text evidence="5">Expressed by the venom duct.</text>
</comment>
<comment type="domain">
    <text evidence="4">The cysteine framework is C-C.</text>
</comment>
<comment type="miscellaneous">
    <text evidence="1">Negative results: has no effect on six different human nAChR subtypes including alpha-1-beta-1-epsilon-delta-epsilon/CHRNA1-CHRNB1-CHRND-CHRNE, alpha-3-beta-2/CHRNA3-CHRNB2, alpha-3-beta-4/CHRNA3-CHRNB4, alpha-4-beta-2/CHRNA4-CHRNB2, alpha-7/CHRNA7 and alpha-9-alpha-10/CHRNA9-CHRNA10, when tested at 1 uM.</text>
</comment>
<comment type="similarity">
    <text evidence="4">Belongs to the elevenin family.</text>
</comment>